<sequence>MLICKVLKPLVSTNRIPGFEHKHLQVVLDGSSNKVAVDAVGCKPGDWVICVGSSAAREAAGSKSYPSDLTIVGIIDHWDPDSPKQIEV</sequence>
<name>CSS4A_PROMP</name>
<feature type="chain" id="PRO_0000452081" description="Carboxysome shell vertex protein CsoS4A">
    <location>
        <begin position="1"/>
        <end position="88"/>
    </location>
</feature>
<feature type="domain" description="BMV" evidence="2">
    <location>
        <begin position="1"/>
        <end position="76"/>
    </location>
</feature>
<gene>
    <name evidence="4" type="primary">csoS4A</name>
    <name type="ordered locus">PMM0554</name>
</gene>
<comment type="function">
    <text evidence="1 6">Probably forms vertices in the carboxysome, a polyhedral inclusion where RuBisCO (ribulose bisphosphate carboxylase, cbbL-cbbS) is sequestered. Has been modeled to induce curvature upon insertion into an otherwise flat hexagonal layer of major carboxysome subunits (By similarity). Has not been identified in purified carboxysomes; it is expected to be present in very low amounts (Probable).</text>
</comment>
<comment type="subunit">
    <text evidence="1">Homopentamer.</text>
</comment>
<comment type="subcellular location">
    <subcellularLocation>
        <location evidence="6">Carboxysome</location>
    </subcellularLocation>
    <text evidence="1 3">Probably forms vertices in the polyhedral carboxysome (By similarity). This bacterium makes alpha-type carboxysomes (PubMed:22155772).</text>
</comment>
<comment type="domain">
    <text evidence="1">The tight homopentamer forms a pore with an opening of about 3.5 Angstroms in diameter which is positively charged.</text>
</comment>
<comment type="similarity">
    <text evidence="5">Belongs to the CcmL/EutN family. CsoS4 subfamily.</text>
</comment>
<proteinExistence type="evidence at protein level"/>
<accession>Q7V2C6</accession>
<protein>
    <recommendedName>
        <fullName evidence="4">Carboxysome shell vertex protein CsoS4A</fullName>
    </recommendedName>
</protein>
<dbReference type="EMBL" id="BX548174">
    <property type="protein sequence ID" value="CAE19013.1"/>
    <property type="molecule type" value="Genomic_DNA"/>
</dbReference>
<dbReference type="RefSeq" id="WP_011132188.1">
    <property type="nucleotide sequence ID" value="NC_005072.1"/>
</dbReference>
<dbReference type="PDB" id="8WXB">
    <property type="method" value="EM"/>
    <property type="resolution" value="4.20 A"/>
    <property type="chains" value="2=1-88"/>
</dbReference>
<dbReference type="PDBsum" id="8WXB"/>
<dbReference type="EMDB" id="EMD-37902"/>
<dbReference type="SMR" id="Q7V2C6"/>
<dbReference type="STRING" id="59919.PMM0554"/>
<dbReference type="KEGG" id="pmm:PMM0554"/>
<dbReference type="eggNOG" id="COG4576">
    <property type="taxonomic scope" value="Bacteria"/>
</dbReference>
<dbReference type="HOGENOM" id="CLU_148498_1_0_3"/>
<dbReference type="OrthoDB" id="540628at2"/>
<dbReference type="Proteomes" id="UP000001026">
    <property type="component" value="Chromosome"/>
</dbReference>
<dbReference type="GO" id="GO:0031470">
    <property type="term" value="C:carboxysome"/>
    <property type="evidence" value="ECO:0007669"/>
    <property type="project" value="UniProtKB-SubCell"/>
</dbReference>
<dbReference type="GO" id="GO:0015977">
    <property type="term" value="P:carbon fixation"/>
    <property type="evidence" value="ECO:0007669"/>
    <property type="project" value="UniProtKB-KW"/>
</dbReference>
<dbReference type="GO" id="GO:0015979">
    <property type="term" value="P:photosynthesis"/>
    <property type="evidence" value="ECO:0007669"/>
    <property type="project" value="UniProtKB-KW"/>
</dbReference>
<dbReference type="CDD" id="cd01614">
    <property type="entry name" value="EutN_CcmL"/>
    <property type="match status" value="1"/>
</dbReference>
<dbReference type="Gene3D" id="2.40.50.220">
    <property type="entry name" value="EutN/Ccml"/>
    <property type="match status" value="1"/>
</dbReference>
<dbReference type="InterPro" id="IPR014076">
    <property type="entry name" value="CsoS4A"/>
</dbReference>
<dbReference type="InterPro" id="IPR004992">
    <property type="entry name" value="EutN_CcmL"/>
</dbReference>
<dbReference type="InterPro" id="IPR036677">
    <property type="entry name" value="EutN_CcmL_sf"/>
</dbReference>
<dbReference type="NCBIfam" id="TIGR02703">
    <property type="entry name" value="carboxysome_A"/>
    <property type="match status" value="1"/>
</dbReference>
<dbReference type="PANTHER" id="PTHR36539:SF1">
    <property type="entry name" value="BACTERIAL MICROCOMPARTMENT SHELL VERTEX PROTEIN EUTN"/>
    <property type="match status" value="1"/>
</dbReference>
<dbReference type="PANTHER" id="PTHR36539">
    <property type="entry name" value="ETHANOLAMINE UTILIZATION PROTEIN EUTN"/>
    <property type="match status" value="1"/>
</dbReference>
<dbReference type="Pfam" id="PF03319">
    <property type="entry name" value="EutN_CcmL"/>
    <property type="match status" value="1"/>
</dbReference>
<dbReference type="SUPFAM" id="SSF159133">
    <property type="entry name" value="EutN/CcmL-like"/>
    <property type="match status" value="1"/>
</dbReference>
<dbReference type="PROSITE" id="PS51932">
    <property type="entry name" value="BMV"/>
    <property type="match status" value="1"/>
</dbReference>
<evidence type="ECO:0000250" key="1">
    <source>
        <dbReference type="UniProtKB" id="O85043"/>
    </source>
</evidence>
<evidence type="ECO:0000255" key="2">
    <source>
        <dbReference type="PROSITE-ProRule" id="PRU01280"/>
    </source>
</evidence>
<evidence type="ECO:0000269" key="3">
    <source>
    </source>
</evidence>
<evidence type="ECO:0000303" key="4">
    <source>
    </source>
</evidence>
<evidence type="ECO:0000305" key="5"/>
<evidence type="ECO:0000305" key="6">
    <source>
    </source>
</evidence>
<organism>
    <name type="scientific">Prochlorococcus marinus subsp. pastoris (strain CCMP1986 / NIES-2087 / MED4)</name>
    <dbReference type="NCBI Taxonomy" id="59919"/>
    <lineage>
        <taxon>Bacteria</taxon>
        <taxon>Bacillati</taxon>
        <taxon>Cyanobacteriota</taxon>
        <taxon>Cyanophyceae</taxon>
        <taxon>Synechococcales</taxon>
        <taxon>Prochlorococcaceae</taxon>
        <taxon>Prochlorococcus</taxon>
    </lineage>
</organism>
<reference key="1">
    <citation type="journal article" date="2003" name="Nature">
        <title>Genome divergence in two Prochlorococcus ecotypes reflects oceanic niche differentiation.</title>
        <authorList>
            <person name="Rocap G."/>
            <person name="Larimer F.W."/>
            <person name="Lamerdin J.E."/>
            <person name="Malfatti S."/>
            <person name="Chain P."/>
            <person name="Ahlgren N.A."/>
            <person name="Arellano A."/>
            <person name="Coleman M."/>
            <person name="Hauser L."/>
            <person name="Hess W.R."/>
            <person name="Johnson Z.I."/>
            <person name="Land M.L."/>
            <person name="Lindell D."/>
            <person name="Post A.F."/>
            <person name="Regala W."/>
            <person name="Shah M."/>
            <person name="Shaw S.L."/>
            <person name="Steglich C."/>
            <person name="Sullivan M.B."/>
            <person name="Ting C.S."/>
            <person name="Tolonen A."/>
            <person name="Webb E.A."/>
            <person name="Zinser E.R."/>
            <person name="Chisholm S.W."/>
        </authorList>
    </citation>
    <scope>NUCLEOTIDE SEQUENCE [LARGE SCALE GENOMIC DNA]</scope>
    <source>
        <strain>CCMP1986 / NIES-2087 / MED4</strain>
    </source>
</reference>
<reference key="2">
    <citation type="journal article" date="2012" name="J. Bacteriol.">
        <title>Isolation and characterization of the Prochlorococcus carboxysome reveal the presence of the novel shell protein CsoS1D.</title>
        <authorList>
            <person name="Roberts E.W."/>
            <person name="Cai F."/>
            <person name="Kerfeld C.A."/>
            <person name="Cannon G.C."/>
            <person name="Heinhorst S."/>
        </authorList>
    </citation>
    <scope>DISCUSSION OF SEQUENCE</scope>
    <scope>FUNCTION</scope>
    <scope>PROTEIN ABUNDANCE</scope>
    <scope>SUBCELLULAR LOCATION</scope>
    <source>
        <strain>CCMP1986 / NIES-2087 / MED4</strain>
    </source>
</reference>
<keyword id="KW-0002">3D-structure</keyword>
<keyword id="KW-1283">Bacterial microcompartment</keyword>
<keyword id="KW-0120">Carbon dioxide fixation</keyword>
<keyword id="KW-1282">Carboxysome</keyword>
<keyword id="KW-0602">Photosynthesis</keyword>